<evidence type="ECO:0000255" key="1">
    <source>
        <dbReference type="HAMAP-Rule" id="MF_00204"/>
    </source>
</evidence>
<protein>
    <recommendedName>
        <fullName evidence="1">UvrABC system protein B</fullName>
        <shortName evidence="1">Protein UvrB</shortName>
    </recommendedName>
    <alternativeName>
        <fullName evidence="1">Excinuclease ABC subunit B</fullName>
    </alternativeName>
</protein>
<organism>
    <name type="scientific">Cupriavidus pinatubonensis (strain JMP 134 / LMG 1197)</name>
    <name type="common">Cupriavidus necator (strain JMP 134)</name>
    <dbReference type="NCBI Taxonomy" id="264198"/>
    <lineage>
        <taxon>Bacteria</taxon>
        <taxon>Pseudomonadati</taxon>
        <taxon>Pseudomonadota</taxon>
        <taxon>Betaproteobacteria</taxon>
        <taxon>Burkholderiales</taxon>
        <taxon>Burkholderiaceae</taxon>
        <taxon>Cupriavidus</taxon>
    </lineage>
</organism>
<reference key="1">
    <citation type="journal article" date="2010" name="PLoS ONE">
        <title>The complete multipartite genome sequence of Cupriavidus necator JMP134, a versatile pollutant degrader.</title>
        <authorList>
            <person name="Lykidis A."/>
            <person name="Perez-Pantoja D."/>
            <person name="Ledger T."/>
            <person name="Mavromatis K."/>
            <person name="Anderson I.J."/>
            <person name="Ivanova N.N."/>
            <person name="Hooper S.D."/>
            <person name="Lapidus A."/>
            <person name="Lucas S."/>
            <person name="Gonzalez B."/>
            <person name="Kyrpides N.C."/>
        </authorList>
    </citation>
    <scope>NUCLEOTIDE SEQUENCE [LARGE SCALE GENOMIC DNA]</scope>
    <source>
        <strain>JMP134 / LMG 1197</strain>
    </source>
</reference>
<dbReference type="EMBL" id="CP000090">
    <property type="protein sequence ID" value="AAZ60430.1"/>
    <property type="molecule type" value="Genomic_DNA"/>
</dbReference>
<dbReference type="SMR" id="Q473K3"/>
<dbReference type="STRING" id="264198.Reut_A1051"/>
<dbReference type="KEGG" id="reu:Reut_A1051"/>
<dbReference type="eggNOG" id="COG0556">
    <property type="taxonomic scope" value="Bacteria"/>
</dbReference>
<dbReference type="HOGENOM" id="CLU_009621_2_1_4"/>
<dbReference type="OrthoDB" id="9806651at2"/>
<dbReference type="GO" id="GO:0005737">
    <property type="term" value="C:cytoplasm"/>
    <property type="evidence" value="ECO:0007669"/>
    <property type="project" value="UniProtKB-SubCell"/>
</dbReference>
<dbReference type="GO" id="GO:0009380">
    <property type="term" value="C:excinuclease repair complex"/>
    <property type="evidence" value="ECO:0007669"/>
    <property type="project" value="InterPro"/>
</dbReference>
<dbReference type="GO" id="GO:0005524">
    <property type="term" value="F:ATP binding"/>
    <property type="evidence" value="ECO:0007669"/>
    <property type="project" value="UniProtKB-UniRule"/>
</dbReference>
<dbReference type="GO" id="GO:0016887">
    <property type="term" value="F:ATP hydrolysis activity"/>
    <property type="evidence" value="ECO:0007669"/>
    <property type="project" value="InterPro"/>
</dbReference>
<dbReference type="GO" id="GO:0003677">
    <property type="term" value="F:DNA binding"/>
    <property type="evidence" value="ECO:0007669"/>
    <property type="project" value="UniProtKB-UniRule"/>
</dbReference>
<dbReference type="GO" id="GO:0009381">
    <property type="term" value="F:excinuclease ABC activity"/>
    <property type="evidence" value="ECO:0007669"/>
    <property type="project" value="UniProtKB-UniRule"/>
</dbReference>
<dbReference type="GO" id="GO:0006289">
    <property type="term" value="P:nucleotide-excision repair"/>
    <property type="evidence" value="ECO:0007669"/>
    <property type="project" value="UniProtKB-UniRule"/>
</dbReference>
<dbReference type="GO" id="GO:0009432">
    <property type="term" value="P:SOS response"/>
    <property type="evidence" value="ECO:0007669"/>
    <property type="project" value="UniProtKB-UniRule"/>
</dbReference>
<dbReference type="CDD" id="cd17916">
    <property type="entry name" value="DEXHc_UvrB"/>
    <property type="match status" value="1"/>
</dbReference>
<dbReference type="CDD" id="cd18790">
    <property type="entry name" value="SF2_C_UvrB"/>
    <property type="match status" value="1"/>
</dbReference>
<dbReference type="Gene3D" id="6.10.140.240">
    <property type="match status" value="1"/>
</dbReference>
<dbReference type="Gene3D" id="3.40.50.300">
    <property type="entry name" value="P-loop containing nucleotide triphosphate hydrolases"/>
    <property type="match status" value="3"/>
</dbReference>
<dbReference type="Gene3D" id="4.10.860.10">
    <property type="entry name" value="UVR domain"/>
    <property type="match status" value="1"/>
</dbReference>
<dbReference type="HAMAP" id="MF_00204">
    <property type="entry name" value="UvrB"/>
    <property type="match status" value="1"/>
</dbReference>
<dbReference type="InterPro" id="IPR006935">
    <property type="entry name" value="Helicase/UvrB_N"/>
</dbReference>
<dbReference type="InterPro" id="IPR014001">
    <property type="entry name" value="Helicase_ATP-bd"/>
</dbReference>
<dbReference type="InterPro" id="IPR001650">
    <property type="entry name" value="Helicase_C-like"/>
</dbReference>
<dbReference type="InterPro" id="IPR027417">
    <property type="entry name" value="P-loop_NTPase"/>
</dbReference>
<dbReference type="InterPro" id="IPR001943">
    <property type="entry name" value="UVR_dom"/>
</dbReference>
<dbReference type="InterPro" id="IPR036876">
    <property type="entry name" value="UVR_dom_sf"/>
</dbReference>
<dbReference type="InterPro" id="IPR004807">
    <property type="entry name" value="UvrB"/>
</dbReference>
<dbReference type="InterPro" id="IPR041471">
    <property type="entry name" value="UvrB_inter"/>
</dbReference>
<dbReference type="InterPro" id="IPR024759">
    <property type="entry name" value="UvrB_YAD/RRR_dom"/>
</dbReference>
<dbReference type="NCBIfam" id="NF003673">
    <property type="entry name" value="PRK05298.1"/>
    <property type="match status" value="1"/>
</dbReference>
<dbReference type="NCBIfam" id="TIGR00631">
    <property type="entry name" value="uvrb"/>
    <property type="match status" value="1"/>
</dbReference>
<dbReference type="PANTHER" id="PTHR24029">
    <property type="entry name" value="UVRABC SYSTEM PROTEIN B"/>
    <property type="match status" value="1"/>
</dbReference>
<dbReference type="PANTHER" id="PTHR24029:SF0">
    <property type="entry name" value="UVRABC SYSTEM PROTEIN B"/>
    <property type="match status" value="1"/>
</dbReference>
<dbReference type="Pfam" id="PF00271">
    <property type="entry name" value="Helicase_C"/>
    <property type="match status" value="1"/>
</dbReference>
<dbReference type="Pfam" id="PF04851">
    <property type="entry name" value="ResIII"/>
    <property type="match status" value="1"/>
</dbReference>
<dbReference type="Pfam" id="PF02151">
    <property type="entry name" value="UVR"/>
    <property type="match status" value="1"/>
</dbReference>
<dbReference type="Pfam" id="PF12344">
    <property type="entry name" value="UvrB"/>
    <property type="match status" value="1"/>
</dbReference>
<dbReference type="Pfam" id="PF17757">
    <property type="entry name" value="UvrB_inter"/>
    <property type="match status" value="1"/>
</dbReference>
<dbReference type="SMART" id="SM00487">
    <property type="entry name" value="DEXDc"/>
    <property type="match status" value="1"/>
</dbReference>
<dbReference type="SMART" id="SM00490">
    <property type="entry name" value="HELICc"/>
    <property type="match status" value="1"/>
</dbReference>
<dbReference type="SUPFAM" id="SSF46600">
    <property type="entry name" value="C-terminal UvrC-binding domain of UvrB"/>
    <property type="match status" value="1"/>
</dbReference>
<dbReference type="SUPFAM" id="SSF52540">
    <property type="entry name" value="P-loop containing nucleoside triphosphate hydrolases"/>
    <property type="match status" value="2"/>
</dbReference>
<dbReference type="PROSITE" id="PS51192">
    <property type="entry name" value="HELICASE_ATP_BIND_1"/>
    <property type="match status" value="1"/>
</dbReference>
<dbReference type="PROSITE" id="PS51194">
    <property type="entry name" value="HELICASE_CTER"/>
    <property type="match status" value="1"/>
</dbReference>
<dbReference type="PROSITE" id="PS50151">
    <property type="entry name" value="UVR"/>
    <property type="match status" value="1"/>
</dbReference>
<proteinExistence type="inferred from homology"/>
<name>UVRB_CUPPJ</name>
<feature type="chain" id="PRO_0000227353" description="UvrABC system protein B">
    <location>
        <begin position="1"/>
        <end position="695"/>
    </location>
</feature>
<feature type="domain" description="Helicase ATP-binding" evidence="1">
    <location>
        <begin position="45"/>
        <end position="434"/>
    </location>
</feature>
<feature type="domain" description="Helicase C-terminal" evidence="1">
    <location>
        <begin position="449"/>
        <end position="602"/>
    </location>
</feature>
<feature type="domain" description="UVR" evidence="1">
    <location>
        <begin position="646"/>
        <end position="681"/>
    </location>
</feature>
<feature type="short sequence motif" description="Beta-hairpin">
    <location>
        <begin position="111"/>
        <end position="134"/>
    </location>
</feature>
<feature type="binding site" evidence="1">
    <location>
        <begin position="58"/>
        <end position="65"/>
    </location>
    <ligand>
        <name>ATP</name>
        <dbReference type="ChEBI" id="CHEBI:30616"/>
    </ligand>
</feature>
<keyword id="KW-0067">ATP-binding</keyword>
<keyword id="KW-0963">Cytoplasm</keyword>
<keyword id="KW-0227">DNA damage</keyword>
<keyword id="KW-0228">DNA excision</keyword>
<keyword id="KW-0234">DNA repair</keyword>
<keyword id="KW-0267">Excision nuclease</keyword>
<keyword id="KW-0547">Nucleotide-binding</keyword>
<keyword id="KW-0742">SOS response</keyword>
<comment type="function">
    <text evidence="1">The UvrABC repair system catalyzes the recognition and processing of DNA lesions. A damage recognition complex composed of 2 UvrA and 2 UvrB subunits scans DNA for abnormalities. Upon binding of the UvrA(2)B(2) complex to a putative damaged site, the DNA wraps around one UvrB monomer. DNA wrap is dependent on ATP binding by UvrB and probably causes local melting of the DNA helix, facilitating insertion of UvrB beta-hairpin between the DNA strands. Then UvrB probes one DNA strand for the presence of a lesion. If a lesion is found the UvrA subunits dissociate and the UvrB-DNA preincision complex is formed. This complex is subsequently bound by UvrC and the second UvrB is released. If no lesion is found, the DNA wraps around the other UvrB subunit that will check the other stand for damage.</text>
</comment>
<comment type="subunit">
    <text evidence="1">Forms a heterotetramer with UvrA during the search for lesions. Interacts with UvrC in an incision complex.</text>
</comment>
<comment type="subcellular location">
    <subcellularLocation>
        <location evidence="1">Cytoplasm</location>
    </subcellularLocation>
</comment>
<comment type="domain">
    <text evidence="1">The beta-hairpin motif is involved in DNA binding.</text>
</comment>
<comment type="similarity">
    <text evidence="1">Belongs to the UvrB family.</text>
</comment>
<accession>Q473K3</accession>
<gene>
    <name evidence="1" type="primary">uvrB</name>
    <name type="ordered locus">Reut_A1051</name>
</gene>
<sequence>MSNLAEVAPALDEDKIVTFPGSPFQLYQPFPPAGDQPEAIRQLVEGIEDGLSFQTLLGVTGSGKTYTMANVIARMGRPAIVFAPNKTLAAQLYSEFREFFPRNAVEYFVSYYDYYQPEAYVPQRDLFIEKDSSINEHIEQMRLSATKSLLERRDTIIVATVSAIYGIGNPNEYHQMILTLRTGDKISQRDVIARLIAMQYTRNETDFQRGTFRVRGDTIDIFPAEHAEMAVRLEMFDDEVESLQFFDPLTGRVRQKIPRFTVYPSSHYVTPRETVLRAIEDIKAELRDRLEFFHKENRLVEVQRLEQRTRFDLEMLSELGFCKGIENYSRHLSGAKPGEPPPTLVDYLPSDALMFLDESHVLIGQLNGMYNGDRARKTTLVEYGFRLPSALDNRPLKFEEFERKMRQVMFVSATPAQFEKEHAGQVVEQVVRPTGLVDPIIIVRPATTQVDDLLSEINLRVEAGERVLVTTLTKRMAEQLTEFLSENGVKVRYLHSDIDTVERVEIIRDLRLGTFDVLVGINLLREGLDIPEVSLVAILDADKEGFLRAERSLIQTIGRAARNVNGTAILYADRITDSMRKAIDETERRRAKQMAFNEANGITPRGVIKRIKDIIDGVYDAGEVKAELLAAQERARYEDMSEKQVSKEIKRLEKLMMDHAKNLEFEKAAQVRDQLAKLKAQLFGASGEEAPMPPV</sequence>